<evidence type="ECO:0000250" key="1">
    <source>
        <dbReference type="UniProtKB" id="P0AEY7"/>
    </source>
</evidence>
<evidence type="ECO:0000269" key="2">
    <source>
    </source>
</evidence>
<evidence type="ECO:0000269" key="3">
    <source>
    </source>
</evidence>
<evidence type="ECO:0000269" key="4">
    <source>
    </source>
</evidence>
<evidence type="ECO:0000303" key="5">
    <source>
    </source>
</evidence>
<evidence type="ECO:0000303" key="6">
    <source>
    </source>
</evidence>
<evidence type="ECO:0000305" key="7"/>
<reference key="1">
    <citation type="journal article" date="1995" name="Proc. Natl. Acad. Sci. U.S.A.">
        <title>A general genetic approach in Escherichia coli for determining the mechanism(s) of action of tumoricidal agents: application to DMP 840, a tumoricidal agent.</title>
        <authorList>
            <person name="Chatterjee P.K."/>
            <person name="Sternberg N.L."/>
        </authorList>
    </citation>
    <scope>NUCLEOTIDE SEQUENCE [GENOMIC DNA]</scope>
    <scope>OVEREXPRESSION</scope>
</reference>
<reference key="2">
    <citation type="journal article" date="1997" name="Science">
        <title>The complete genome sequence of Escherichia coli K-12.</title>
        <authorList>
            <person name="Blattner F.R."/>
            <person name="Plunkett G. III"/>
            <person name="Bloch C.A."/>
            <person name="Perna N.T."/>
            <person name="Burland V."/>
            <person name="Riley M."/>
            <person name="Collado-Vides J."/>
            <person name="Glasner J.D."/>
            <person name="Rode C.K."/>
            <person name="Mayhew G.F."/>
            <person name="Gregor J."/>
            <person name="Davis N.W."/>
            <person name="Kirkpatrick H.A."/>
            <person name="Goeden M.A."/>
            <person name="Rose D.J."/>
            <person name="Mau B."/>
            <person name="Shao Y."/>
        </authorList>
    </citation>
    <scope>NUCLEOTIDE SEQUENCE [LARGE SCALE GENOMIC DNA]</scope>
    <source>
        <strain>K12 / MG1655 / ATCC 47076</strain>
    </source>
</reference>
<reference key="3">
    <citation type="journal article" date="2006" name="Mol. Syst. Biol.">
        <title>Highly accurate genome sequences of Escherichia coli K-12 strains MG1655 and W3110.</title>
        <authorList>
            <person name="Hayashi K."/>
            <person name="Morooka N."/>
            <person name="Yamamoto Y."/>
            <person name="Fujita K."/>
            <person name="Isono K."/>
            <person name="Choi S."/>
            <person name="Ohtsubo E."/>
            <person name="Baba T."/>
            <person name="Wanner B.L."/>
            <person name="Mori H."/>
            <person name="Horiuchi T."/>
        </authorList>
    </citation>
    <scope>NUCLEOTIDE SEQUENCE [LARGE SCALE GENOMIC DNA]</scope>
    <source>
        <strain>K12 / W3110 / ATCC 27325 / DSM 5911</strain>
    </source>
</reference>
<reference key="4">
    <citation type="journal article" date="1996" name="Biochim. Biophys. Acta">
        <title>NADPH-specific quinone reductase is induced by 2-methylene-4-butyrolactone in Escherichia coli.</title>
        <authorList>
            <person name="Hayashi M."/>
            <person name="Ohzeki H."/>
            <person name="Shimada H."/>
            <person name="Unemoto T."/>
        </authorList>
    </citation>
    <scope>PROTEIN SEQUENCE OF 2-21</scope>
    <scope>FUNCTION</scope>
    <scope>CATALYTIC ACTIVITY</scope>
    <scope>COFACTOR</scope>
    <scope>BIOPHYSICOCHEMICAL PROPERTIES</scope>
    <scope>SUBCELLULAR LOCATION</scope>
    <scope>INDUCTION</scope>
</reference>
<reference key="5">
    <citation type="journal article" date="2005" name="J. Biol. Chem.">
        <title>Structural and biochemical evidence for an enzymatic quinone redox cycle in Escherichia coli: identification of a novel quinol monooxygenase.</title>
        <authorList>
            <person name="Adams M.A."/>
            <person name="Jia Z."/>
        </authorList>
    </citation>
    <scope>FUNCTION</scope>
</reference>
<name>MDAB_ECOLI</name>
<dbReference type="EC" id="1.6.5.10" evidence="4"/>
<dbReference type="EMBL" id="U18656">
    <property type="protein sequence ID" value="AAC43451.1"/>
    <property type="molecule type" value="Genomic_DNA"/>
</dbReference>
<dbReference type="EMBL" id="U28377">
    <property type="protein sequence ID" value="AAA69196.1"/>
    <property type="molecule type" value="Genomic_DNA"/>
</dbReference>
<dbReference type="EMBL" id="U00096">
    <property type="protein sequence ID" value="AAC76064.1"/>
    <property type="molecule type" value="Genomic_DNA"/>
</dbReference>
<dbReference type="EMBL" id="AP009048">
    <property type="protein sequence ID" value="BAE77084.1"/>
    <property type="molecule type" value="Genomic_DNA"/>
</dbReference>
<dbReference type="PIR" id="I80319">
    <property type="entry name" value="I80319"/>
</dbReference>
<dbReference type="RefSeq" id="NP_417500.1">
    <property type="nucleotide sequence ID" value="NC_000913.3"/>
</dbReference>
<dbReference type="RefSeq" id="WP_000065430.1">
    <property type="nucleotide sequence ID" value="NZ_STEB01000001.1"/>
</dbReference>
<dbReference type="SMR" id="P0AEY5"/>
<dbReference type="BioGRID" id="4263034">
    <property type="interactions" value="21"/>
</dbReference>
<dbReference type="FunCoup" id="P0AEY5">
    <property type="interactions" value="11"/>
</dbReference>
<dbReference type="IntAct" id="P0AEY5">
    <property type="interactions" value="3"/>
</dbReference>
<dbReference type="STRING" id="511145.b3028"/>
<dbReference type="jPOST" id="P0AEY5"/>
<dbReference type="PaxDb" id="511145-b3028"/>
<dbReference type="EnsemblBacteria" id="AAC76064">
    <property type="protein sequence ID" value="AAC76064"/>
    <property type="gene ID" value="b3028"/>
</dbReference>
<dbReference type="GeneID" id="86861166"/>
<dbReference type="GeneID" id="947512"/>
<dbReference type="KEGG" id="ecj:JW2996"/>
<dbReference type="KEGG" id="eco:b3028"/>
<dbReference type="KEGG" id="ecoc:C3026_16540"/>
<dbReference type="PATRIC" id="fig|1411691.4.peg.3703"/>
<dbReference type="EchoBASE" id="EB2524"/>
<dbReference type="eggNOG" id="COG2249">
    <property type="taxonomic scope" value="Bacteria"/>
</dbReference>
<dbReference type="HOGENOM" id="CLU_083846_0_0_6"/>
<dbReference type="InParanoid" id="P0AEY5"/>
<dbReference type="OMA" id="PTFICND"/>
<dbReference type="OrthoDB" id="9798454at2"/>
<dbReference type="PhylomeDB" id="P0AEY5"/>
<dbReference type="BioCyc" id="EcoCyc:EG12656-MONOMER"/>
<dbReference type="BioCyc" id="MetaCyc:EG12656-MONOMER"/>
<dbReference type="EvolutionaryTrace" id="P0AEY5"/>
<dbReference type="PRO" id="PR:P0AEY5"/>
<dbReference type="Proteomes" id="UP000000625">
    <property type="component" value="Chromosome"/>
</dbReference>
<dbReference type="GO" id="GO:0005829">
    <property type="term" value="C:cytosol"/>
    <property type="evidence" value="ECO:0000314"/>
    <property type="project" value="EcoCyc"/>
</dbReference>
<dbReference type="GO" id="GO:0050660">
    <property type="term" value="F:flavin adenine dinucleotide binding"/>
    <property type="evidence" value="ECO:0000314"/>
    <property type="project" value="EcoCyc"/>
</dbReference>
<dbReference type="GO" id="GO:0008753">
    <property type="term" value="F:NADPH dehydrogenase (quinone) activity"/>
    <property type="evidence" value="ECO:0000314"/>
    <property type="project" value="EcoCyc"/>
</dbReference>
<dbReference type="FunFam" id="3.40.50.360:FF:000007">
    <property type="entry name" value="Drug activity modulator B"/>
    <property type="match status" value="1"/>
</dbReference>
<dbReference type="Gene3D" id="3.40.50.360">
    <property type="match status" value="1"/>
</dbReference>
<dbReference type="InterPro" id="IPR003680">
    <property type="entry name" value="Flavodoxin_fold"/>
</dbReference>
<dbReference type="InterPro" id="IPR029039">
    <property type="entry name" value="Flavoprotein-like_sf"/>
</dbReference>
<dbReference type="InterPro" id="IPR052397">
    <property type="entry name" value="NADPH-QR_MdaB"/>
</dbReference>
<dbReference type="PANTHER" id="PTHR46305">
    <property type="match status" value="1"/>
</dbReference>
<dbReference type="PANTHER" id="PTHR46305:SF3">
    <property type="entry name" value="NADPH:QUINONE OXIDOREDUCTASE MDAB"/>
    <property type="match status" value="1"/>
</dbReference>
<dbReference type="Pfam" id="PF02525">
    <property type="entry name" value="Flavodoxin_2"/>
    <property type="match status" value="1"/>
</dbReference>
<dbReference type="SUPFAM" id="SSF52218">
    <property type="entry name" value="Flavoproteins"/>
    <property type="match status" value="1"/>
</dbReference>
<protein>
    <recommendedName>
        <fullName evidence="7">NADPH:quinone oxidoreductase MdaB</fullName>
        <ecNumber evidence="4">1.6.5.10</ecNumber>
    </recommendedName>
    <alternativeName>
        <fullName evidence="5">Modulator of drug activity B</fullName>
    </alternativeName>
</protein>
<comment type="function">
    <text evidence="2 4">NADPH-specific quinone reductase (PubMed:8611590). Is most active with quinone derivatives and ferricyanide as electron acceptors (PubMed:8611590). Can use menadione, 1,4-naphthoquinone and 1,4-benzoquinone (PubMed:8611590). May work in concert with YgiN to form a quinone redox cycle (PubMed:15613473).</text>
</comment>
<comment type="catalytic activity">
    <reaction evidence="4">
        <text>a quinone + NADPH + H(+) = a quinol + NADP(+)</text>
        <dbReference type="Rhea" id="RHEA:46164"/>
        <dbReference type="ChEBI" id="CHEBI:15378"/>
        <dbReference type="ChEBI" id="CHEBI:24646"/>
        <dbReference type="ChEBI" id="CHEBI:57783"/>
        <dbReference type="ChEBI" id="CHEBI:58349"/>
        <dbReference type="ChEBI" id="CHEBI:132124"/>
        <dbReference type="EC" id="1.6.5.10"/>
    </reaction>
</comment>
<comment type="catalytic activity">
    <reaction evidence="4">
        <text>menadione + NADPH + H(+) = menadiol + NADP(+)</text>
        <dbReference type="Rhea" id="RHEA:63492"/>
        <dbReference type="ChEBI" id="CHEBI:6746"/>
        <dbReference type="ChEBI" id="CHEBI:15378"/>
        <dbReference type="ChEBI" id="CHEBI:28869"/>
        <dbReference type="ChEBI" id="CHEBI:57783"/>
        <dbReference type="ChEBI" id="CHEBI:58349"/>
    </reaction>
</comment>
<comment type="cofactor">
    <cofactor evidence="4">
        <name>FAD</name>
        <dbReference type="ChEBI" id="CHEBI:57692"/>
    </cofactor>
</comment>
<comment type="biophysicochemical properties">
    <kinetics>
        <KM evidence="4">10.5 uM for NADPH</KM>
        <KM evidence="4">6 uM for menadione</KM>
    </kinetics>
    <phDependence>
        <text evidence="4">Optimum pH is 7.0.</text>
    </phDependence>
</comment>
<comment type="subunit">
    <text evidence="1">Homodimer.</text>
</comment>
<comment type="subcellular location">
    <subcellularLocation>
        <location evidence="4">Cytoplasm</location>
    </subcellularLocation>
</comment>
<comment type="induction">
    <text evidence="4">Induced by 2-methylene-4-butyrolactone (MBL).</text>
</comment>
<comment type="miscellaneous">
    <text evidence="3">Overexpression leads to increased resistance to the tumoricidal agent DMP 840.</text>
</comment>
<comment type="similarity">
    <text evidence="7">Belongs to the oxidoreductase MdaB family.</text>
</comment>
<accession>P0AEY5</accession>
<accession>P40717</accession>
<accession>Q2M9H2</accession>
<keyword id="KW-0963">Cytoplasm</keyword>
<keyword id="KW-0903">Direct protein sequencing</keyword>
<keyword id="KW-0274">FAD</keyword>
<keyword id="KW-0285">Flavoprotein</keyword>
<keyword id="KW-0560">Oxidoreductase</keyword>
<keyword id="KW-1185">Reference proteome</keyword>
<gene>
    <name evidence="5" type="primary">mdaB</name>
    <name evidence="6" type="synonym">mda66</name>
    <name type="ordered locus">b3028</name>
    <name type="ordered locus">JW2996</name>
</gene>
<feature type="initiator methionine" description="Removed" evidence="4">
    <location>
        <position position="1"/>
    </location>
</feature>
<feature type="chain" id="PRO_0000096312" description="NADPH:quinone oxidoreductase MdaB">
    <location>
        <begin position="2"/>
        <end position="193"/>
    </location>
</feature>
<feature type="binding site" evidence="1">
    <location>
        <begin position="16"/>
        <end position="23"/>
    </location>
    <ligand>
        <name>FAD</name>
        <dbReference type="ChEBI" id="CHEBI:57692"/>
    </ligand>
</feature>
<feature type="binding site" evidence="1">
    <location>
        <begin position="69"/>
        <end position="72"/>
    </location>
    <ligand>
        <name>FAD</name>
        <dbReference type="ChEBI" id="CHEBI:57692"/>
    </ligand>
</feature>
<feature type="binding site" evidence="1">
    <location>
        <position position="108"/>
    </location>
    <ligand>
        <name>FAD</name>
        <dbReference type="ChEBI" id="CHEBI:57692"/>
    </ligand>
</feature>
<feature type="binding site" evidence="1">
    <location>
        <begin position="124"/>
        <end position="127"/>
    </location>
    <ligand>
        <name>FAD</name>
        <dbReference type="ChEBI" id="CHEBI:57692"/>
    </ligand>
</feature>
<sequence>MSNILIINGAKKFAHSNGQLNDTLTEVADGTLRDLGHDVRIVRADSDYDVKAEVQNFLWADVVIWQMPGWWMGAPWTVKKYIDDVFTEGHGTLYASDGRTRKDPSKKYGSGGLVQGKKYMLSLTWNAPMEAFTEKDQFFHGVGVDGVYLPFHKANQFLGMEPLPTFIANDVIKMPDVPRYTEEYRKHLVEIFG</sequence>
<proteinExistence type="evidence at protein level"/>
<organism>
    <name type="scientific">Escherichia coli (strain K12)</name>
    <dbReference type="NCBI Taxonomy" id="83333"/>
    <lineage>
        <taxon>Bacteria</taxon>
        <taxon>Pseudomonadati</taxon>
        <taxon>Pseudomonadota</taxon>
        <taxon>Gammaproteobacteria</taxon>
        <taxon>Enterobacterales</taxon>
        <taxon>Enterobacteriaceae</taxon>
        <taxon>Escherichia</taxon>
    </lineage>
</organism>